<accession>B0VQ88</accession>
<keyword id="KW-0056">Arginine metabolism</keyword>
<keyword id="KW-0378">Hydrolase</keyword>
<organism>
    <name type="scientific">Acinetobacter baumannii (strain SDF)</name>
    <dbReference type="NCBI Taxonomy" id="509170"/>
    <lineage>
        <taxon>Bacteria</taxon>
        <taxon>Pseudomonadati</taxon>
        <taxon>Pseudomonadota</taxon>
        <taxon>Gammaproteobacteria</taxon>
        <taxon>Moraxellales</taxon>
        <taxon>Moraxellaceae</taxon>
        <taxon>Acinetobacter</taxon>
        <taxon>Acinetobacter calcoaceticus/baumannii complex</taxon>
    </lineage>
</organism>
<dbReference type="EC" id="3.5.3.23" evidence="1"/>
<dbReference type="EMBL" id="CU468230">
    <property type="protein sequence ID" value="CAO99752.1"/>
    <property type="molecule type" value="Genomic_DNA"/>
</dbReference>
<dbReference type="SMR" id="B0VQ88"/>
<dbReference type="KEGG" id="abm:ABSDF0358"/>
<dbReference type="HOGENOM" id="CLU_053835_0_0_6"/>
<dbReference type="UniPathway" id="UPA00185">
    <property type="reaction ID" value="UER00280"/>
</dbReference>
<dbReference type="Proteomes" id="UP000001741">
    <property type="component" value="Chromosome"/>
</dbReference>
<dbReference type="GO" id="GO:0009015">
    <property type="term" value="F:N-succinylarginine dihydrolase activity"/>
    <property type="evidence" value="ECO:0007669"/>
    <property type="project" value="UniProtKB-UniRule"/>
</dbReference>
<dbReference type="GO" id="GO:0019544">
    <property type="term" value="P:arginine catabolic process to glutamate"/>
    <property type="evidence" value="ECO:0007669"/>
    <property type="project" value="UniProtKB-UniRule"/>
</dbReference>
<dbReference type="GO" id="GO:0019545">
    <property type="term" value="P:arginine catabolic process to succinate"/>
    <property type="evidence" value="ECO:0007669"/>
    <property type="project" value="UniProtKB-UniRule"/>
</dbReference>
<dbReference type="Gene3D" id="3.75.10.20">
    <property type="entry name" value="Succinylarginine dihydrolase"/>
    <property type="match status" value="1"/>
</dbReference>
<dbReference type="HAMAP" id="MF_01172">
    <property type="entry name" value="AstB"/>
    <property type="match status" value="1"/>
</dbReference>
<dbReference type="InterPro" id="IPR037031">
    <property type="entry name" value="AstB_sf"/>
</dbReference>
<dbReference type="InterPro" id="IPR007079">
    <property type="entry name" value="SuccinylArg_d-Hdrlase_AstB"/>
</dbReference>
<dbReference type="NCBIfam" id="TIGR03241">
    <property type="entry name" value="arg_catab_astB"/>
    <property type="match status" value="1"/>
</dbReference>
<dbReference type="NCBIfam" id="NF009789">
    <property type="entry name" value="PRK13281.1"/>
    <property type="match status" value="1"/>
</dbReference>
<dbReference type="PANTHER" id="PTHR30420">
    <property type="entry name" value="N-SUCCINYLARGININE DIHYDROLASE"/>
    <property type="match status" value="1"/>
</dbReference>
<dbReference type="PANTHER" id="PTHR30420:SF2">
    <property type="entry name" value="N-SUCCINYLARGININE DIHYDROLASE"/>
    <property type="match status" value="1"/>
</dbReference>
<dbReference type="Pfam" id="PF04996">
    <property type="entry name" value="AstB"/>
    <property type="match status" value="1"/>
</dbReference>
<dbReference type="SUPFAM" id="SSF55909">
    <property type="entry name" value="Pentein"/>
    <property type="match status" value="1"/>
</dbReference>
<reference key="1">
    <citation type="journal article" date="2008" name="PLoS ONE">
        <title>Comparative analysis of Acinetobacters: three genomes for three lifestyles.</title>
        <authorList>
            <person name="Vallenet D."/>
            <person name="Nordmann P."/>
            <person name="Barbe V."/>
            <person name="Poirel L."/>
            <person name="Mangenot S."/>
            <person name="Bataille E."/>
            <person name="Dossat C."/>
            <person name="Gas S."/>
            <person name="Kreimeyer A."/>
            <person name="Lenoble P."/>
            <person name="Oztas S."/>
            <person name="Poulain J."/>
            <person name="Segurens B."/>
            <person name="Robert C."/>
            <person name="Abergel C."/>
            <person name="Claverie J.-M."/>
            <person name="Raoult D."/>
            <person name="Medigue C."/>
            <person name="Weissenbach J."/>
            <person name="Cruveiller S."/>
        </authorList>
    </citation>
    <scope>NUCLEOTIDE SEQUENCE [LARGE SCALE GENOMIC DNA]</scope>
    <source>
        <strain>SDF</strain>
    </source>
</reference>
<comment type="function">
    <text evidence="1">Catalyzes the hydrolysis of N(2)-succinylarginine into N(2)-succinylornithine, ammonia and CO(2).</text>
</comment>
<comment type="catalytic activity">
    <reaction evidence="1">
        <text>N(2)-succinyl-L-arginine + 2 H2O + 2 H(+) = N(2)-succinyl-L-ornithine + 2 NH4(+) + CO2</text>
        <dbReference type="Rhea" id="RHEA:19533"/>
        <dbReference type="ChEBI" id="CHEBI:15377"/>
        <dbReference type="ChEBI" id="CHEBI:15378"/>
        <dbReference type="ChEBI" id="CHEBI:16526"/>
        <dbReference type="ChEBI" id="CHEBI:28938"/>
        <dbReference type="ChEBI" id="CHEBI:58241"/>
        <dbReference type="ChEBI" id="CHEBI:58514"/>
        <dbReference type="EC" id="3.5.3.23"/>
    </reaction>
</comment>
<comment type="pathway">
    <text evidence="1">Amino-acid degradation; L-arginine degradation via AST pathway; L-glutamate and succinate from L-arginine: step 2/5.</text>
</comment>
<comment type="subunit">
    <text evidence="1">Homodimer.</text>
</comment>
<comment type="similarity">
    <text evidence="1">Belongs to the succinylarginine dihydrolase family.</text>
</comment>
<name>ASTB_ACIBS</name>
<feature type="chain" id="PRO_1000137998" description="N-succinylarginine dihydrolase">
    <location>
        <begin position="1"/>
        <end position="447"/>
    </location>
</feature>
<feature type="active site" evidence="1">
    <location>
        <position position="174"/>
    </location>
</feature>
<feature type="active site" evidence="1">
    <location>
        <position position="250"/>
    </location>
</feature>
<feature type="active site" description="Nucleophile" evidence="1">
    <location>
        <position position="371"/>
    </location>
</feature>
<feature type="binding site" evidence="1">
    <location>
        <begin position="19"/>
        <end position="28"/>
    </location>
    <ligand>
        <name>substrate</name>
    </ligand>
</feature>
<feature type="binding site" evidence="1">
    <location>
        <position position="110"/>
    </location>
    <ligand>
        <name>substrate</name>
    </ligand>
</feature>
<feature type="binding site" evidence="1">
    <location>
        <begin position="137"/>
        <end position="138"/>
    </location>
    <ligand>
        <name>substrate</name>
    </ligand>
</feature>
<feature type="binding site" evidence="1">
    <location>
        <position position="214"/>
    </location>
    <ligand>
        <name>substrate</name>
    </ligand>
</feature>
<feature type="binding site" evidence="1">
    <location>
        <position position="252"/>
    </location>
    <ligand>
        <name>substrate</name>
    </ligand>
</feature>
<feature type="binding site" evidence="1">
    <location>
        <position position="365"/>
    </location>
    <ligand>
        <name>substrate</name>
    </ligand>
</feature>
<sequence length="447" mass="49836">MKGYEVNFDGLVGPTHHYAGLSFGNEASTKNCNNLSNPKLAAKQGLLKMKALADMGMKQGVLAPHERPHVPMLRRLGFTGDDISVVAQAMRYSPELLSSLSSASPMWTANAATVSPSADSQDERVHFTAANLNNKFHRSIEAETTSQVLQAIFKNERHFVHHEALPQVALFGDEGAANHNRLGGDYAKRGVQVFVYGQQHLNNGLPGPKRYPARQTREASEAIARLHRLDESHTVFVQQNPDVIDQGVFHNDVIAVSNQQVSFHHQHAFLNQDQAFAEIRQKMASIGEDFISIEVPENRVTVDDAVATYLFNSQILTRPDGGMTIVVPEESRQNAAVWSYLNDMIQMGTPIDAIQVYDLRESMRNGGGPACLRLRVALNETELNAVNPKVLMNDQLFMTLNQWVDKHYRDRLAQEDLADPHLLMESRMAFDELTKILGLGSVYPFQK</sequence>
<protein>
    <recommendedName>
        <fullName evidence="1">N-succinylarginine dihydrolase</fullName>
        <ecNumber evidence="1">3.5.3.23</ecNumber>
    </recommendedName>
</protein>
<gene>
    <name evidence="1" type="primary">astB</name>
    <name type="ordered locus">ABSDF0358</name>
</gene>
<evidence type="ECO:0000255" key="1">
    <source>
        <dbReference type="HAMAP-Rule" id="MF_01172"/>
    </source>
</evidence>
<proteinExistence type="inferred from homology"/>